<sequence>MPVIEEIDDIDDIDNLEMDLAELDSTMKTPVAPKIVPTVVRSQDQEEEAYSAAISGNAGSGSGFNFVNSTTGQVEKSHSLTKEELDEIKEFQMLYPCYFDTRRTHAQGRRAPKDLCVENPLAKTIADAARSLGIPSIFEGSKTHPQDFGNPGRVRVLIKENGKPFVSGIDNKRVLMKRIGEYLKSHPTTLESVKQLPYGPDFDNVEPKKIPLLKGTAMNDIVPLHSPYLTQHPMTKSLYDAPPPPPPAQQVSAPEKQMKMPKNKFRVVRR</sequence>
<comment type="function">
    <text evidence="1">Signal-recognition-particle assembly has a crucial role in targeting secretory proteins to the rough endoplasmic reticulum membrane. It must be involved intimately in the translocation of a wide variety of protein substrates (By similarity).</text>
</comment>
<comment type="subunit">
    <text evidence="1">Fungal signal recognition particle consists of a 7S RNA molecule (scR1) and at least six protein subunits: SRP72, SRP68, SRP54, SEC65, SRP21 and SRP14.</text>
</comment>
<comment type="subcellular location">
    <subcellularLocation>
        <location evidence="1">Cytoplasm</location>
    </subcellularLocation>
</comment>
<comment type="similarity">
    <text evidence="3">Belongs to the SRP19 family.</text>
</comment>
<reference key="1">
    <citation type="journal article" date="2004" name="Nature">
        <title>Genome evolution in yeasts.</title>
        <authorList>
            <person name="Dujon B."/>
            <person name="Sherman D."/>
            <person name="Fischer G."/>
            <person name="Durrens P."/>
            <person name="Casaregola S."/>
            <person name="Lafontaine I."/>
            <person name="de Montigny J."/>
            <person name="Marck C."/>
            <person name="Neuveglise C."/>
            <person name="Talla E."/>
            <person name="Goffard N."/>
            <person name="Frangeul L."/>
            <person name="Aigle M."/>
            <person name="Anthouard V."/>
            <person name="Babour A."/>
            <person name="Barbe V."/>
            <person name="Barnay S."/>
            <person name="Blanchin S."/>
            <person name="Beckerich J.-M."/>
            <person name="Beyne E."/>
            <person name="Bleykasten C."/>
            <person name="Boisrame A."/>
            <person name="Boyer J."/>
            <person name="Cattolico L."/>
            <person name="Confanioleri F."/>
            <person name="de Daruvar A."/>
            <person name="Despons L."/>
            <person name="Fabre E."/>
            <person name="Fairhead C."/>
            <person name="Ferry-Dumazet H."/>
            <person name="Groppi A."/>
            <person name="Hantraye F."/>
            <person name="Hennequin C."/>
            <person name="Jauniaux N."/>
            <person name="Joyet P."/>
            <person name="Kachouri R."/>
            <person name="Kerrest A."/>
            <person name="Koszul R."/>
            <person name="Lemaire M."/>
            <person name="Lesur I."/>
            <person name="Ma L."/>
            <person name="Muller H."/>
            <person name="Nicaud J.-M."/>
            <person name="Nikolski M."/>
            <person name="Oztas S."/>
            <person name="Ozier-Kalogeropoulos O."/>
            <person name="Pellenz S."/>
            <person name="Potier S."/>
            <person name="Richard G.-F."/>
            <person name="Straub M.-L."/>
            <person name="Suleau A."/>
            <person name="Swennen D."/>
            <person name="Tekaia F."/>
            <person name="Wesolowski-Louvel M."/>
            <person name="Westhof E."/>
            <person name="Wirth B."/>
            <person name="Zeniou-Meyer M."/>
            <person name="Zivanovic Y."/>
            <person name="Bolotin-Fukuhara M."/>
            <person name="Thierry A."/>
            <person name="Bouchier C."/>
            <person name="Caudron B."/>
            <person name="Scarpelli C."/>
            <person name="Gaillardin C."/>
            <person name="Weissenbach J."/>
            <person name="Wincker P."/>
            <person name="Souciet J.-L."/>
        </authorList>
    </citation>
    <scope>NUCLEOTIDE SEQUENCE [LARGE SCALE GENOMIC DNA]</scope>
    <source>
        <strain>ATCC 8585 / CBS 2359 / DSM 70799 / NBRC 1267 / NRRL Y-1140 / WM37</strain>
    </source>
</reference>
<reference key="2">
    <citation type="journal article" date="1999" name="Yeast">
        <title>The URA5 gene encoding orotate-phosphoribosyl transferase of the yeast Kluyveromyces lactis: cloning, sequencing and use as a selectable marker.</title>
        <authorList>
            <person name="Bai X."/>
            <person name="Larsen M."/>
            <person name="Meinhardt F."/>
        </authorList>
    </citation>
    <scope>NUCLEOTIDE SEQUENCE [GENOMIC DNA] OF 90-270</scope>
    <source>
        <strain>ATCC 56498 / CBS 683 / DSM 4394 / NBRC 1090 / NRRL Y-8279</strain>
    </source>
</reference>
<evidence type="ECO:0000250" key="1"/>
<evidence type="ECO:0000256" key="2">
    <source>
        <dbReference type="SAM" id="MobiDB-lite"/>
    </source>
</evidence>
<evidence type="ECO:0000305" key="3"/>
<protein>
    <recommendedName>
        <fullName>Signal recognition particle SEC65 subunit</fullName>
    </recommendedName>
</protein>
<gene>
    <name type="primary">SEC65</name>
    <name type="ordered locus">KLLA0D01925g</name>
</gene>
<accession>O13475</accession>
<accession>Q6CSD6</accession>
<name>SEC65_KLULA</name>
<organism>
    <name type="scientific">Kluyveromyces lactis (strain ATCC 8585 / CBS 2359 / DSM 70799 / NBRC 1267 / NRRL Y-1140 / WM37)</name>
    <name type="common">Yeast</name>
    <name type="synonym">Candida sphaerica</name>
    <dbReference type="NCBI Taxonomy" id="284590"/>
    <lineage>
        <taxon>Eukaryota</taxon>
        <taxon>Fungi</taxon>
        <taxon>Dikarya</taxon>
        <taxon>Ascomycota</taxon>
        <taxon>Saccharomycotina</taxon>
        <taxon>Saccharomycetes</taxon>
        <taxon>Saccharomycetales</taxon>
        <taxon>Saccharomycetaceae</taxon>
        <taxon>Kluyveromyces</taxon>
    </lineage>
</organism>
<dbReference type="EMBL" id="CR382124">
    <property type="protein sequence ID" value="CAH00249.1"/>
    <property type="molecule type" value="Genomic_DNA"/>
</dbReference>
<dbReference type="EMBL" id="AJ001358">
    <property type="protein sequence ID" value="CAA04695.1"/>
    <property type="molecule type" value="Genomic_DNA"/>
</dbReference>
<dbReference type="RefSeq" id="XP_453153.1">
    <property type="nucleotide sequence ID" value="XM_453153.1"/>
</dbReference>
<dbReference type="SMR" id="O13475"/>
<dbReference type="FunCoup" id="O13475">
    <property type="interactions" value="91"/>
</dbReference>
<dbReference type="STRING" id="284590.O13475"/>
<dbReference type="PaxDb" id="284590-O13475"/>
<dbReference type="KEGG" id="kla:KLLA0_D01925g"/>
<dbReference type="eggNOG" id="KOG3198">
    <property type="taxonomic scope" value="Eukaryota"/>
</dbReference>
<dbReference type="HOGENOM" id="CLU_065433_1_1_1"/>
<dbReference type="InParanoid" id="O13475"/>
<dbReference type="OMA" id="IPKVKGF"/>
<dbReference type="Proteomes" id="UP000000598">
    <property type="component" value="Chromosome D"/>
</dbReference>
<dbReference type="GO" id="GO:0005786">
    <property type="term" value="C:signal recognition particle, endoplasmic reticulum targeting"/>
    <property type="evidence" value="ECO:0007669"/>
    <property type="project" value="UniProtKB-KW"/>
</dbReference>
<dbReference type="GO" id="GO:0008312">
    <property type="term" value="F:7S RNA binding"/>
    <property type="evidence" value="ECO:0007669"/>
    <property type="project" value="InterPro"/>
</dbReference>
<dbReference type="GO" id="GO:0006617">
    <property type="term" value="P:SRP-dependent cotranslational protein targeting to membrane, signal sequence recognition"/>
    <property type="evidence" value="ECO:0007669"/>
    <property type="project" value="TreeGrafter"/>
</dbReference>
<dbReference type="FunFam" id="3.30.56.30:FF:000003">
    <property type="entry name" value="Signal recognition particle SEC65 subunit"/>
    <property type="match status" value="1"/>
</dbReference>
<dbReference type="Gene3D" id="3.30.56.30">
    <property type="entry name" value="Signal recognition particle, SRP19-like subunit"/>
    <property type="match status" value="1"/>
</dbReference>
<dbReference type="InterPro" id="IPR002778">
    <property type="entry name" value="Signal_recog_particle_SRP19"/>
</dbReference>
<dbReference type="InterPro" id="IPR036521">
    <property type="entry name" value="SRP19-like_sf"/>
</dbReference>
<dbReference type="PANTHER" id="PTHR17453">
    <property type="entry name" value="SIGNAL RECOGNITION PARTICLE 19 KD PROTEIN"/>
    <property type="match status" value="1"/>
</dbReference>
<dbReference type="PANTHER" id="PTHR17453:SF0">
    <property type="entry name" value="SIGNAL RECOGNITION PARTICLE 19 KDA PROTEIN"/>
    <property type="match status" value="1"/>
</dbReference>
<dbReference type="Pfam" id="PF01922">
    <property type="entry name" value="SRP19"/>
    <property type="match status" value="1"/>
</dbReference>
<dbReference type="SUPFAM" id="SSF69695">
    <property type="entry name" value="SRP19"/>
    <property type="match status" value="1"/>
</dbReference>
<keyword id="KW-0963">Cytoplasm</keyword>
<keyword id="KW-1185">Reference proteome</keyword>
<keyword id="KW-0687">Ribonucleoprotein</keyword>
<keyword id="KW-0694">RNA-binding</keyword>
<keyword id="KW-0733">Signal recognition particle</keyword>
<feature type="chain" id="PRO_0000135209" description="Signal recognition particle SEC65 subunit">
    <location>
        <begin position="1"/>
        <end position="270"/>
    </location>
</feature>
<feature type="region of interest" description="Disordered" evidence="2">
    <location>
        <begin position="237"/>
        <end position="270"/>
    </location>
</feature>
<feature type="compositionally biased region" description="Basic residues" evidence="2">
    <location>
        <begin position="259"/>
        <end position="270"/>
    </location>
</feature>
<proteinExistence type="inferred from homology"/>